<keyword id="KW-0378">Hydrolase</keyword>
<keyword id="KW-0479">Metal-binding</keyword>
<keyword id="KW-1185">Reference proteome</keyword>
<keyword id="KW-0862">Zinc</keyword>
<gene>
    <name evidence="1" type="primary">gloB</name>
    <name type="ordered locus">AHA_1567</name>
</gene>
<proteinExistence type="inferred from homology"/>
<protein>
    <recommendedName>
        <fullName evidence="1">Hydroxyacylglutathione hydrolase</fullName>
        <ecNumber evidence="1">3.1.2.6</ecNumber>
    </recommendedName>
    <alternativeName>
        <fullName evidence="1">Glyoxalase II</fullName>
        <shortName evidence="1">Glx II</shortName>
    </alternativeName>
</protein>
<name>GLO2_AERHH</name>
<reference key="1">
    <citation type="journal article" date="2006" name="J. Bacteriol.">
        <title>Genome sequence of Aeromonas hydrophila ATCC 7966T: jack of all trades.</title>
        <authorList>
            <person name="Seshadri R."/>
            <person name="Joseph S.W."/>
            <person name="Chopra A.K."/>
            <person name="Sha J."/>
            <person name="Shaw J."/>
            <person name="Graf J."/>
            <person name="Haft D.H."/>
            <person name="Wu M."/>
            <person name="Ren Q."/>
            <person name="Rosovitz M.J."/>
            <person name="Madupu R."/>
            <person name="Tallon L."/>
            <person name="Kim M."/>
            <person name="Jin S."/>
            <person name="Vuong H."/>
            <person name="Stine O.C."/>
            <person name="Ali A."/>
            <person name="Horneman A.J."/>
            <person name="Heidelberg J.F."/>
        </authorList>
    </citation>
    <scope>NUCLEOTIDE SEQUENCE [LARGE SCALE GENOMIC DNA]</scope>
    <source>
        <strain>ATCC 7966 / DSM 30187 / BCRC 13018 / CCUG 14551 / JCM 1027 / KCTC 2358 / NCIMB 9240 / NCTC 8049</strain>
    </source>
</reference>
<feature type="chain" id="PRO_0000309622" description="Hydroxyacylglutathione hydrolase">
    <location>
        <begin position="1"/>
        <end position="254"/>
    </location>
</feature>
<feature type="binding site" evidence="1">
    <location>
        <position position="53"/>
    </location>
    <ligand>
        <name>Zn(2+)</name>
        <dbReference type="ChEBI" id="CHEBI:29105"/>
        <label>1</label>
    </ligand>
</feature>
<feature type="binding site" evidence="1">
    <location>
        <position position="55"/>
    </location>
    <ligand>
        <name>Zn(2+)</name>
        <dbReference type="ChEBI" id="CHEBI:29105"/>
        <label>1</label>
    </ligand>
</feature>
<feature type="binding site" evidence="1">
    <location>
        <position position="57"/>
    </location>
    <ligand>
        <name>Zn(2+)</name>
        <dbReference type="ChEBI" id="CHEBI:29105"/>
        <label>2</label>
    </ligand>
</feature>
<feature type="binding site" evidence="1">
    <location>
        <position position="58"/>
    </location>
    <ligand>
        <name>Zn(2+)</name>
        <dbReference type="ChEBI" id="CHEBI:29105"/>
        <label>2</label>
    </ligand>
</feature>
<feature type="binding site" evidence="1">
    <location>
        <position position="111"/>
    </location>
    <ligand>
        <name>Zn(2+)</name>
        <dbReference type="ChEBI" id="CHEBI:29105"/>
        <label>1</label>
    </ligand>
</feature>
<feature type="binding site" evidence="1">
    <location>
        <position position="128"/>
    </location>
    <ligand>
        <name>Zn(2+)</name>
        <dbReference type="ChEBI" id="CHEBI:29105"/>
        <label>1</label>
    </ligand>
</feature>
<feature type="binding site" evidence="1">
    <location>
        <position position="128"/>
    </location>
    <ligand>
        <name>Zn(2+)</name>
        <dbReference type="ChEBI" id="CHEBI:29105"/>
        <label>2</label>
    </ligand>
</feature>
<feature type="binding site" evidence="1">
    <location>
        <position position="166"/>
    </location>
    <ligand>
        <name>Zn(2+)</name>
        <dbReference type="ChEBI" id="CHEBI:29105"/>
        <label>2</label>
    </ligand>
</feature>
<dbReference type="EC" id="3.1.2.6" evidence="1"/>
<dbReference type="EMBL" id="CP000462">
    <property type="protein sequence ID" value="ABK38580.1"/>
    <property type="molecule type" value="Genomic_DNA"/>
</dbReference>
<dbReference type="RefSeq" id="WP_011705462.1">
    <property type="nucleotide sequence ID" value="NC_008570.1"/>
</dbReference>
<dbReference type="RefSeq" id="YP_856103.1">
    <property type="nucleotide sequence ID" value="NC_008570.1"/>
</dbReference>
<dbReference type="SMR" id="A0KIK2"/>
<dbReference type="STRING" id="380703.AHA_1567"/>
<dbReference type="EnsemblBacteria" id="ABK38580">
    <property type="protein sequence ID" value="ABK38580"/>
    <property type="gene ID" value="AHA_1567"/>
</dbReference>
<dbReference type="GeneID" id="4487042"/>
<dbReference type="KEGG" id="aha:AHA_1567"/>
<dbReference type="PATRIC" id="fig|380703.7.peg.1578"/>
<dbReference type="eggNOG" id="COG0491">
    <property type="taxonomic scope" value="Bacteria"/>
</dbReference>
<dbReference type="HOGENOM" id="CLU_030571_4_1_6"/>
<dbReference type="OrthoDB" id="9802248at2"/>
<dbReference type="UniPathway" id="UPA00619">
    <property type="reaction ID" value="UER00676"/>
</dbReference>
<dbReference type="Proteomes" id="UP000000756">
    <property type="component" value="Chromosome"/>
</dbReference>
<dbReference type="GO" id="GO:0004416">
    <property type="term" value="F:hydroxyacylglutathione hydrolase activity"/>
    <property type="evidence" value="ECO:0007669"/>
    <property type="project" value="UniProtKB-UniRule"/>
</dbReference>
<dbReference type="GO" id="GO:0046872">
    <property type="term" value="F:metal ion binding"/>
    <property type="evidence" value="ECO:0007669"/>
    <property type="project" value="UniProtKB-KW"/>
</dbReference>
<dbReference type="GO" id="GO:0019243">
    <property type="term" value="P:methylglyoxal catabolic process to D-lactate via S-lactoyl-glutathione"/>
    <property type="evidence" value="ECO:0007669"/>
    <property type="project" value="InterPro"/>
</dbReference>
<dbReference type="CDD" id="cd07723">
    <property type="entry name" value="hydroxyacylglutathione_hydrolase_MBL-fold"/>
    <property type="match status" value="1"/>
</dbReference>
<dbReference type="Gene3D" id="3.60.15.10">
    <property type="entry name" value="Ribonuclease Z/Hydroxyacylglutathione hydrolase-like"/>
    <property type="match status" value="1"/>
</dbReference>
<dbReference type="HAMAP" id="MF_01374">
    <property type="entry name" value="Glyoxalase_2"/>
    <property type="match status" value="1"/>
</dbReference>
<dbReference type="InterPro" id="IPR035680">
    <property type="entry name" value="Clx_II_MBL"/>
</dbReference>
<dbReference type="InterPro" id="IPR050110">
    <property type="entry name" value="Glyoxalase_II_hydrolase"/>
</dbReference>
<dbReference type="InterPro" id="IPR032282">
    <property type="entry name" value="HAGH_C"/>
</dbReference>
<dbReference type="InterPro" id="IPR017782">
    <property type="entry name" value="Hydroxyacylglutathione_Hdrlase"/>
</dbReference>
<dbReference type="InterPro" id="IPR001279">
    <property type="entry name" value="Metallo-B-lactamas"/>
</dbReference>
<dbReference type="InterPro" id="IPR036866">
    <property type="entry name" value="RibonucZ/Hydroxyglut_hydro"/>
</dbReference>
<dbReference type="NCBIfam" id="TIGR03413">
    <property type="entry name" value="GSH_gloB"/>
    <property type="match status" value="1"/>
</dbReference>
<dbReference type="PANTHER" id="PTHR43705">
    <property type="entry name" value="HYDROXYACYLGLUTATHIONE HYDROLASE"/>
    <property type="match status" value="1"/>
</dbReference>
<dbReference type="PANTHER" id="PTHR43705:SF1">
    <property type="entry name" value="HYDROXYACYLGLUTATHIONE HYDROLASE GLOB"/>
    <property type="match status" value="1"/>
</dbReference>
<dbReference type="Pfam" id="PF16123">
    <property type="entry name" value="HAGH_C"/>
    <property type="match status" value="1"/>
</dbReference>
<dbReference type="Pfam" id="PF00753">
    <property type="entry name" value="Lactamase_B"/>
    <property type="match status" value="1"/>
</dbReference>
<dbReference type="PIRSF" id="PIRSF005457">
    <property type="entry name" value="Glx"/>
    <property type="match status" value="1"/>
</dbReference>
<dbReference type="SMART" id="SM00849">
    <property type="entry name" value="Lactamase_B"/>
    <property type="match status" value="1"/>
</dbReference>
<dbReference type="SUPFAM" id="SSF56281">
    <property type="entry name" value="Metallo-hydrolase/oxidoreductase"/>
    <property type="match status" value="1"/>
</dbReference>
<comment type="function">
    <text evidence="1">Thiolesterase that catalyzes the hydrolysis of S-D-lactoyl-glutathione to form glutathione and D-lactic acid.</text>
</comment>
<comment type="catalytic activity">
    <reaction evidence="1">
        <text>an S-(2-hydroxyacyl)glutathione + H2O = a 2-hydroxy carboxylate + glutathione + H(+)</text>
        <dbReference type="Rhea" id="RHEA:21864"/>
        <dbReference type="ChEBI" id="CHEBI:15377"/>
        <dbReference type="ChEBI" id="CHEBI:15378"/>
        <dbReference type="ChEBI" id="CHEBI:57925"/>
        <dbReference type="ChEBI" id="CHEBI:58896"/>
        <dbReference type="ChEBI" id="CHEBI:71261"/>
        <dbReference type="EC" id="3.1.2.6"/>
    </reaction>
</comment>
<comment type="cofactor">
    <cofactor evidence="1">
        <name>Zn(2+)</name>
        <dbReference type="ChEBI" id="CHEBI:29105"/>
    </cofactor>
    <text evidence="1">Binds 2 Zn(2+) ions per subunit.</text>
</comment>
<comment type="pathway">
    <text evidence="1">Secondary metabolite metabolism; methylglyoxal degradation; (R)-lactate from methylglyoxal: step 2/2.</text>
</comment>
<comment type="subunit">
    <text evidence="1">Monomer.</text>
</comment>
<comment type="similarity">
    <text evidence="1">Belongs to the metallo-beta-lactamase superfamily. Glyoxalase II family.</text>
</comment>
<accession>A0KIK2</accession>
<evidence type="ECO:0000255" key="1">
    <source>
        <dbReference type="HAMAP-Rule" id="MF_01374"/>
    </source>
</evidence>
<sequence length="254" mass="28622">MYPVITVPAFNDNYIWLIRHENHCLVVDPGDAEPVLERLAALDLQLDAILLTHHHHDHVGGVTALLGHFPHARLYGPKLDPMPAHHGQWLDDGDQINWHGLSLEVIHVPGHTHGHIAYYGHGMLFCGDTLFSAGCGRLFEGTPAQMHASLQRLAALPDDTLIYCAHEYTLSNLRFAYAVEPDNHAIQQRIGLISKLRQQGLPSLPSRLGDEREFNVFLRCEQDSVKFSAEKHALKCLENPEDTFTVLRSWKDVF</sequence>
<organism>
    <name type="scientific">Aeromonas hydrophila subsp. hydrophila (strain ATCC 7966 / DSM 30187 / BCRC 13018 / CCUG 14551 / JCM 1027 / KCTC 2358 / NCIMB 9240 / NCTC 8049)</name>
    <dbReference type="NCBI Taxonomy" id="380703"/>
    <lineage>
        <taxon>Bacteria</taxon>
        <taxon>Pseudomonadati</taxon>
        <taxon>Pseudomonadota</taxon>
        <taxon>Gammaproteobacteria</taxon>
        <taxon>Aeromonadales</taxon>
        <taxon>Aeromonadaceae</taxon>
        <taxon>Aeromonas</taxon>
    </lineage>
</organism>